<gene>
    <name evidence="1" type="primary">accA</name>
    <name type="ordered locus">TDE_0589</name>
</gene>
<name>ACCA_TREDE</name>
<proteinExistence type="inferred from homology"/>
<protein>
    <recommendedName>
        <fullName evidence="1">Acetyl-coenzyme A carboxylase carboxyl transferase subunit alpha</fullName>
        <shortName evidence="1">ACCase subunit alpha</shortName>
        <shortName evidence="1">Acetyl-CoA carboxylase carboxyltransferase subunit alpha</shortName>
        <ecNumber evidence="1">2.1.3.15</ecNumber>
    </recommendedName>
</protein>
<sequence length="305" mass="33417">MSNKDQTNLLNNLKDIAQKAGLDISEELAKINAKLESSTALSKTWERVELARHSDRPRTLDYINLIFDNFTELHGDRFFGDDPAMIGGIGFIDGMPVTVIGTQKGRNLRETIDRNGGMANPEGYRKAMRLAKQAEKFKRPIITFIDTQGAYPGLGAEERGIGEAIAFNLREFSRLKTPIICIIIGEGGSGGALGIGVGDKIYMLENAIFSVISPEGCASILLRDSSRAKDAAAMLKITSQEVLDLKVINGIIPEPEKGAHTDPKKTADAIKEQILKDLADLTKRDPAVLVKYRSKKIRSIGKYSE</sequence>
<dbReference type="EC" id="2.1.3.15" evidence="1"/>
<dbReference type="EMBL" id="AE017226">
    <property type="protein sequence ID" value="AAS11084.1"/>
    <property type="molecule type" value="Genomic_DNA"/>
</dbReference>
<dbReference type="RefSeq" id="NP_971203.1">
    <property type="nucleotide sequence ID" value="NC_002967.9"/>
</dbReference>
<dbReference type="RefSeq" id="WP_002676956.1">
    <property type="nucleotide sequence ID" value="NC_002967.9"/>
</dbReference>
<dbReference type="SMR" id="Q73Q55"/>
<dbReference type="STRING" id="243275.TDE_0589"/>
<dbReference type="PaxDb" id="243275-TDE_0589"/>
<dbReference type="GeneID" id="2741552"/>
<dbReference type="KEGG" id="tde:TDE_0589"/>
<dbReference type="PATRIC" id="fig|243275.7.peg.569"/>
<dbReference type="eggNOG" id="COG0825">
    <property type="taxonomic scope" value="Bacteria"/>
</dbReference>
<dbReference type="HOGENOM" id="CLU_015486_0_2_12"/>
<dbReference type="OrthoDB" id="9803706at2"/>
<dbReference type="UniPathway" id="UPA00655">
    <property type="reaction ID" value="UER00711"/>
</dbReference>
<dbReference type="Proteomes" id="UP000008212">
    <property type="component" value="Chromosome"/>
</dbReference>
<dbReference type="GO" id="GO:0009317">
    <property type="term" value="C:acetyl-CoA carboxylase complex"/>
    <property type="evidence" value="ECO:0007669"/>
    <property type="project" value="InterPro"/>
</dbReference>
<dbReference type="GO" id="GO:0003989">
    <property type="term" value="F:acetyl-CoA carboxylase activity"/>
    <property type="evidence" value="ECO:0007669"/>
    <property type="project" value="InterPro"/>
</dbReference>
<dbReference type="GO" id="GO:0005524">
    <property type="term" value="F:ATP binding"/>
    <property type="evidence" value="ECO:0007669"/>
    <property type="project" value="UniProtKB-KW"/>
</dbReference>
<dbReference type="GO" id="GO:0016743">
    <property type="term" value="F:carboxyl- or carbamoyltransferase activity"/>
    <property type="evidence" value="ECO:0007669"/>
    <property type="project" value="UniProtKB-UniRule"/>
</dbReference>
<dbReference type="GO" id="GO:0006633">
    <property type="term" value="P:fatty acid biosynthetic process"/>
    <property type="evidence" value="ECO:0007669"/>
    <property type="project" value="UniProtKB-KW"/>
</dbReference>
<dbReference type="GO" id="GO:2001295">
    <property type="term" value="P:malonyl-CoA biosynthetic process"/>
    <property type="evidence" value="ECO:0007669"/>
    <property type="project" value="UniProtKB-UniRule"/>
</dbReference>
<dbReference type="Gene3D" id="3.90.226.10">
    <property type="entry name" value="2-enoyl-CoA Hydratase, Chain A, domain 1"/>
    <property type="match status" value="1"/>
</dbReference>
<dbReference type="HAMAP" id="MF_00823">
    <property type="entry name" value="AcetylCoA_CT_alpha"/>
    <property type="match status" value="1"/>
</dbReference>
<dbReference type="InterPro" id="IPR001095">
    <property type="entry name" value="Acetyl_CoA_COase_a_su"/>
</dbReference>
<dbReference type="InterPro" id="IPR029045">
    <property type="entry name" value="ClpP/crotonase-like_dom_sf"/>
</dbReference>
<dbReference type="InterPro" id="IPR011763">
    <property type="entry name" value="COA_CT_C"/>
</dbReference>
<dbReference type="NCBIfam" id="TIGR00513">
    <property type="entry name" value="accA"/>
    <property type="match status" value="1"/>
</dbReference>
<dbReference type="NCBIfam" id="NF041504">
    <property type="entry name" value="AccA_sub"/>
    <property type="match status" value="1"/>
</dbReference>
<dbReference type="NCBIfam" id="NF004344">
    <property type="entry name" value="PRK05724.1"/>
    <property type="match status" value="1"/>
</dbReference>
<dbReference type="PANTHER" id="PTHR42853">
    <property type="entry name" value="ACETYL-COENZYME A CARBOXYLASE CARBOXYL TRANSFERASE SUBUNIT ALPHA"/>
    <property type="match status" value="1"/>
</dbReference>
<dbReference type="PANTHER" id="PTHR42853:SF3">
    <property type="entry name" value="ACETYL-COENZYME A CARBOXYLASE CARBOXYL TRANSFERASE SUBUNIT ALPHA, CHLOROPLASTIC"/>
    <property type="match status" value="1"/>
</dbReference>
<dbReference type="Pfam" id="PF03255">
    <property type="entry name" value="ACCA"/>
    <property type="match status" value="1"/>
</dbReference>
<dbReference type="PRINTS" id="PR01069">
    <property type="entry name" value="ACCCTRFRASEA"/>
</dbReference>
<dbReference type="SUPFAM" id="SSF52096">
    <property type="entry name" value="ClpP/crotonase"/>
    <property type="match status" value="1"/>
</dbReference>
<dbReference type="PROSITE" id="PS50989">
    <property type="entry name" value="COA_CT_CTER"/>
    <property type="match status" value="1"/>
</dbReference>
<keyword id="KW-0067">ATP-binding</keyword>
<keyword id="KW-0963">Cytoplasm</keyword>
<keyword id="KW-0275">Fatty acid biosynthesis</keyword>
<keyword id="KW-0276">Fatty acid metabolism</keyword>
<keyword id="KW-0444">Lipid biosynthesis</keyword>
<keyword id="KW-0443">Lipid metabolism</keyword>
<keyword id="KW-0547">Nucleotide-binding</keyword>
<keyword id="KW-1185">Reference proteome</keyword>
<keyword id="KW-0808">Transferase</keyword>
<accession>Q73Q55</accession>
<comment type="function">
    <text evidence="1">Component of the acetyl coenzyme A carboxylase (ACC) complex. First, biotin carboxylase catalyzes the carboxylation of biotin on its carrier protein (BCCP) and then the CO(2) group is transferred by the carboxyltransferase to acetyl-CoA to form malonyl-CoA.</text>
</comment>
<comment type="catalytic activity">
    <reaction evidence="1">
        <text>N(6)-carboxybiotinyl-L-lysyl-[protein] + acetyl-CoA = N(6)-biotinyl-L-lysyl-[protein] + malonyl-CoA</text>
        <dbReference type="Rhea" id="RHEA:54728"/>
        <dbReference type="Rhea" id="RHEA-COMP:10505"/>
        <dbReference type="Rhea" id="RHEA-COMP:10506"/>
        <dbReference type="ChEBI" id="CHEBI:57288"/>
        <dbReference type="ChEBI" id="CHEBI:57384"/>
        <dbReference type="ChEBI" id="CHEBI:83144"/>
        <dbReference type="ChEBI" id="CHEBI:83145"/>
        <dbReference type="EC" id="2.1.3.15"/>
    </reaction>
</comment>
<comment type="pathway">
    <text evidence="1">Lipid metabolism; malonyl-CoA biosynthesis; malonyl-CoA from acetyl-CoA: step 1/1.</text>
</comment>
<comment type="subunit">
    <text evidence="1">Acetyl-CoA carboxylase is a heterohexamer composed of biotin carboxyl carrier protein (AccB), biotin carboxylase (AccC) and two subunits each of ACCase subunit alpha (AccA) and ACCase subunit beta (AccD).</text>
</comment>
<comment type="subcellular location">
    <subcellularLocation>
        <location evidence="1">Cytoplasm</location>
    </subcellularLocation>
</comment>
<comment type="similarity">
    <text evidence="1">Belongs to the AccA family.</text>
</comment>
<feature type="chain" id="PRO_0000223846" description="Acetyl-coenzyme A carboxylase carboxyl transferase subunit alpha">
    <location>
        <begin position="1"/>
        <end position="305"/>
    </location>
</feature>
<feature type="domain" description="CoA carboxyltransferase C-terminal" evidence="2">
    <location>
        <begin position="33"/>
        <end position="280"/>
    </location>
</feature>
<evidence type="ECO:0000255" key="1">
    <source>
        <dbReference type="HAMAP-Rule" id="MF_00823"/>
    </source>
</evidence>
<evidence type="ECO:0000255" key="2">
    <source>
        <dbReference type="PROSITE-ProRule" id="PRU01137"/>
    </source>
</evidence>
<reference key="1">
    <citation type="journal article" date="2004" name="Proc. Natl. Acad. Sci. U.S.A.">
        <title>Comparison of the genome of the oral pathogen Treponema denticola with other spirochete genomes.</title>
        <authorList>
            <person name="Seshadri R."/>
            <person name="Myers G.S.A."/>
            <person name="Tettelin H."/>
            <person name="Eisen J.A."/>
            <person name="Heidelberg J.F."/>
            <person name="Dodson R.J."/>
            <person name="Davidsen T.M."/>
            <person name="DeBoy R.T."/>
            <person name="Fouts D.E."/>
            <person name="Haft D.H."/>
            <person name="Selengut J."/>
            <person name="Ren Q."/>
            <person name="Brinkac L.M."/>
            <person name="Madupu R."/>
            <person name="Kolonay J.F."/>
            <person name="Durkin S.A."/>
            <person name="Daugherty S.C."/>
            <person name="Shetty J."/>
            <person name="Shvartsbeyn A."/>
            <person name="Gebregeorgis E."/>
            <person name="Geer K."/>
            <person name="Tsegaye G."/>
            <person name="Malek J.A."/>
            <person name="Ayodeji B."/>
            <person name="Shatsman S."/>
            <person name="McLeod M.P."/>
            <person name="Smajs D."/>
            <person name="Howell J.K."/>
            <person name="Pal S."/>
            <person name="Amin A."/>
            <person name="Vashisth P."/>
            <person name="McNeill T.Z."/>
            <person name="Xiang Q."/>
            <person name="Sodergren E."/>
            <person name="Baca E."/>
            <person name="Weinstock G.M."/>
            <person name="Norris S.J."/>
            <person name="Fraser C.M."/>
            <person name="Paulsen I.T."/>
        </authorList>
    </citation>
    <scope>NUCLEOTIDE SEQUENCE [LARGE SCALE GENOMIC DNA]</scope>
    <source>
        <strain>ATCC 35405 / DSM 14222 / CIP 103919 / JCM 8153 / KCTC 15104</strain>
    </source>
</reference>
<organism>
    <name type="scientific">Treponema denticola (strain ATCC 35405 / DSM 14222 / CIP 103919 / JCM 8153 / KCTC 15104)</name>
    <dbReference type="NCBI Taxonomy" id="243275"/>
    <lineage>
        <taxon>Bacteria</taxon>
        <taxon>Pseudomonadati</taxon>
        <taxon>Spirochaetota</taxon>
        <taxon>Spirochaetia</taxon>
        <taxon>Spirochaetales</taxon>
        <taxon>Treponemataceae</taxon>
        <taxon>Treponema</taxon>
    </lineage>
</organism>